<name>RIMP_ACIC5</name>
<gene>
    <name evidence="1" type="primary">rimP</name>
    <name type="ordered locus">ACP_3325</name>
</gene>
<accession>C1F695</accession>
<evidence type="ECO:0000255" key="1">
    <source>
        <dbReference type="HAMAP-Rule" id="MF_01077"/>
    </source>
</evidence>
<dbReference type="EMBL" id="CP001472">
    <property type="protein sequence ID" value="ACO32774.1"/>
    <property type="molecule type" value="Genomic_DNA"/>
</dbReference>
<dbReference type="RefSeq" id="WP_015898358.1">
    <property type="nucleotide sequence ID" value="NC_012483.1"/>
</dbReference>
<dbReference type="SMR" id="C1F695"/>
<dbReference type="FunCoup" id="C1F695">
    <property type="interactions" value="320"/>
</dbReference>
<dbReference type="STRING" id="240015.ACP_3325"/>
<dbReference type="KEGG" id="aca:ACP_3325"/>
<dbReference type="eggNOG" id="COG0779">
    <property type="taxonomic scope" value="Bacteria"/>
</dbReference>
<dbReference type="HOGENOM" id="CLU_070525_1_1_0"/>
<dbReference type="InParanoid" id="C1F695"/>
<dbReference type="OrthoDB" id="9805006at2"/>
<dbReference type="Proteomes" id="UP000002207">
    <property type="component" value="Chromosome"/>
</dbReference>
<dbReference type="GO" id="GO:0005829">
    <property type="term" value="C:cytosol"/>
    <property type="evidence" value="ECO:0007669"/>
    <property type="project" value="TreeGrafter"/>
</dbReference>
<dbReference type="GO" id="GO:0000028">
    <property type="term" value="P:ribosomal small subunit assembly"/>
    <property type="evidence" value="ECO:0007669"/>
    <property type="project" value="TreeGrafter"/>
</dbReference>
<dbReference type="GO" id="GO:0006412">
    <property type="term" value="P:translation"/>
    <property type="evidence" value="ECO:0007669"/>
    <property type="project" value="TreeGrafter"/>
</dbReference>
<dbReference type="CDD" id="cd01734">
    <property type="entry name" value="YlxS_C"/>
    <property type="match status" value="1"/>
</dbReference>
<dbReference type="Gene3D" id="2.30.30.180">
    <property type="entry name" value="Ribosome maturation factor RimP, C-terminal domain"/>
    <property type="match status" value="1"/>
</dbReference>
<dbReference type="Gene3D" id="3.30.300.70">
    <property type="entry name" value="RimP-like superfamily, N-terminal"/>
    <property type="match status" value="1"/>
</dbReference>
<dbReference type="HAMAP" id="MF_01077">
    <property type="entry name" value="RimP"/>
    <property type="match status" value="1"/>
</dbReference>
<dbReference type="InterPro" id="IPR003728">
    <property type="entry name" value="Ribosome_maturation_RimP"/>
</dbReference>
<dbReference type="InterPro" id="IPR028998">
    <property type="entry name" value="RimP_C"/>
</dbReference>
<dbReference type="InterPro" id="IPR036847">
    <property type="entry name" value="RimP_C_sf"/>
</dbReference>
<dbReference type="InterPro" id="IPR028989">
    <property type="entry name" value="RimP_N"/>
</dbReference>
<dbReference type="InterPro" id="IPR035956">
    <property type="entry name" value="RimP_N_sf"/>
</dbReference>
<dbReference type="PANTHER" id="PTHR33867">
    <property type="entry name" value="RIBOSOME MATURATION FACTOR RIMP"/>
    <property type="match status" value="1"/>
</dbReference>
<dbReference type="PANTHER" id="PTHR33867:SF1">
    <property type="entry name" value="RIBOSOME MATURATION FACTOR RIMP"/>
    <property type="match status" value="1"/>
</dbReference>
<dbReference type="Pfam" id="PF17384">
    <property type="entry name" value="DUF150_C"/>
    <property type="match status" value="1"/>
</dbReference>
<dbReference type="Pfam" id="PF02576">
    <property type="entry name" value="RimP_N"/>
    <property type="match status" value="1"/>
</dbReference>
<dbReference type="SUPFAM" id="SSF74942">
    <property type="entry name" value="YhbC-like, C-terminal domain"/>
    <property type="match status" value="1"/>
</dbReference>
<dbReference type="SUPFAM" id="SSF75420">
    <property type="entry name" value="YhbC-like, N-terminal domain"/>
    <property type="match status" value="1"/>
</dbReference>
<sequence length="201" mass="22164">MAFDLDTIRSAAQRVASSHGLDVVDVEYQGGAKHRMLRIFIEKNAEERAKLAAQSSGRVETIEVHEEMPREGMNPEHFSGVTHEDCSAFSTDFGTLLDVEELMPGASEYTLEVSSPGLDRKLQSRADYERFAGSLVKLSTFEPVNGNRHWQGRMAGLDGDTLRLDLTAMKQKGKGKEKKSAAETVEIALGNVEKAQLIPEI</sequence>
<proteinExistence type="inferred from homology"/>
<reference key="1">
    <citation type="journal article" date="2009" name="Appl. Environ. Microbiol.">
        <title>Three genomes from the phylum Acidobacteria provide insight into the lifestyles of these microorganisms in soils.</title>
        <authorList>
            <person name="Ward N.L."/>
            <person name="Challacombe J.F."/>
            <person name="Janssen P.H."/>
            <person name="Henrissat B."/>
            <person name="Coutinho P.M."/>
            <person name="Wu M."/>
            <person name="Xie G."/>
            <person name="Haft D.H."/>
            <person name="Sait M."/>
            <person name="Badger J."/>
            <person name="Barabote R.D."/>
            <person name="Bradley B."/>
            <person name="Brettin T.S."/>
            <person name="Brinkac L.M."/>
            <person name="Bruce D."/>
            <person name="Creasy T."/>
            <person name="Daugherty S.C."/>
            <person name="Davidsen T.M."/>
            <person name="DeBoy R.T."/>
            <person name="Detter J.C."/>
            <person name="Dodson R.J."/>
            <person name="Durkin A.S."/>
            <person name="Ganapathy A."/>
            <person name="Gwinn-Giglio M."/>
            <person name="Han C.S."/>
            <person name="Khouri H."/>
            <person name="Kiss H."/>
            <person name="Kothari S.P."/>
            <person name="Madupu R."/>
            <person name="Nelson K.E."/>
            <person name="Nelson W.C."/>
            <person name="Paulsen I."/>
            <person name="Penn K."/>
            <person name="Ren Q."/>
            <person name="Rosovitz M.J."/>
            <person name="Selengut J.D."/>
            <person name="Shrivastava S."/>
            <person name="Sullivan S.A."/>
            <person name="Tapia R."/>
            <person name="Thompson L.S."/>
            <person name="Watkins K.L."/>
            <person name="Yang Q."/>
            <person name="Yu C."/>
            <person name="Zafar N."/>
            <person name="Zhou L."/>
            <person name="Kuske C.R."/>
        </authorList>
    </citation>
    <scope>NUCLEOTIDE SEQUENCE [LARGE SCALE GENOMIC DNA]</scope>
    <source>
        <strain>ATCC 51196 / DSM 11244 / BCRC 80197 / JCM 7670 / NBRC 15755 / NCIMB 13165 / 161</strain>
    </source>
</reference>
<keyword id="KW-0963">Cytoplasm</keyword>
<keyword id="KW-1185">Reference proteome</keyword>
<keyword id="KW-0690">Ribosome biogenesis</keyword>
<protein>
    <recommendedName>
        <fullName evidence="1">Ribosome maturation factor RimP</fullName>
    </recommendedName>
</protein>
<comment type="function">
    <text evidence="1">Required for maturation of 30S ribosomal subunits.</text>
</comment>
<comment type="subcellular location">
    <subcellularLocation>
        <location evidence="1">Cytoplasm</location>
    </subcellularLocation>
</comment>
<comment type="similarity">
    <text evidence="1">Belongs to the RimP family.</text>
</comment>
<feature type="chain" id="PRO_0000384588" description="Ribosome maturation factor RimP">
    <location>
        <begin position="1"/>
        <end position="201"/>
    </location>
</feature>
<organism>
    <name type="scientific">Acidobacterium capsulatum (strain ATCC 51196 / DSM 11244 / BCRC 80197 / JCM 7670 / NBRC 15755 / NCIMB 13165 / 161)</name>
    <dbReference type="NCBI Taxonomy" id="240015"/>
    <lineage>
        <taxon>Bacteria</taxon>
        <taxon>Pseudomonadati</taxon>
        <taxon>Acidobacteriota</taxon>
        <taxon>Terriglobia</taxon>
        <taxon>Terriglobales</taxon>
        <taxon>Acidobacteriaceae</taxon>
        <taxon>Acidobacterium</taxon>
    </lineage>
</organism>